<feature type="chain" id="PRO_0000458618" description="Large ribosomal subunit protein uL22m">
    <location>
        <begin position="1"/>
        <end position="364"/>
    </location>
</feature>
<gene>
    <name type="primary">mrpl22</name>
    <name type="ORF">NCU05813</name>
</gene>
<comment type="function">
    <text evidence="5">Component of the mitochondrial ribosome (mitoribosome), a dedicated translation machinery responsible for the synthesis of mitochondrial genome-encoded proteins, including at least some of the essential transmembrane subunits of the mitochondrial respiratory chain. The mitoribosomes are attached to the mitochondrial inner membrane and translation products are cotranslationally integrated into the membrane.</text>
</comment>
<comment type="subunit">
    <text evidence="1 2">Component of the mitochondrial large ribosomal subunit (mt-LSU). Mature N.crassa 74S mitochondrial ribosomes consist of a small (37S) and a large (54S) subunit. The 37S small subunit contains a 16S ribosomal RNA (16S mt-rRNA) and 32 different proteins. The 54S large subunit contains a 23S rRNA (23S mt-rRNA) and 42 different proteins. uL22m forms the wall of the exit tunnel.</text>
</comment>
<comment type="subcellular location">
    <subcellularLocation>
        <location evidence="1 2">Mitochondrion</location>
    </subcellularLocation>
</comment>
<comment type="similarity">
    <text evidence="4">Belongs to the universal ribosomal protein uL22 family.</text>
</comment>
<evidence type="ECO:0000269" key="1">
    <source>
    </source>
</evidence>
<evidence type="ECO:0000269" key="2">
    <source>
    </source>
</evidence>
<evidence type="ECO:0000303" key="3">
    <source>
    </source>
</evidence>
<evidence type="ECO:0000305" key="4"/>
<evidence type="ECO:0000305" key="5">
    <source>
    </source>
</evidence>
<evidence type="ECO:0007744" key="6">
    <source>
        <dbReference type="PDB" id="6YWE"/>
    </source>
</evidence>
<evidence type="ECO:0007744" key="7">
    <source>
        <dbReference type="PDB" id="6YWS"/>
    </source>
</evidence>
<sequence length="364" mass="41483">MSLNVPSRRLLKSAPSSANALVPALQSLSINTRSIHTTPSQQWSLFGWGKQKVEERNKVKEELKQSELARTRKPTQEEIFERVRGRLEGDSIFADTTPSSQLAAEQDKHKDWATASAEKKLAAAHAKDQTPTGISLKKDHLVRVVDPDPRSRVRWERKMVIRKLQRGTDPWSVEPKAERIARTERKLVYKTGYLPTSVKKLVHLSRQIRGKTVSEALVQMQFSKKKMAKEVKTELLRAEAKAIVTRGMGLGKAAAAAAQKETGAEPVKIQTKDGKHLEIRDPTRIYVAETFVNKGFTRGVELDYRARGRVFKMNKPTTTMTVVLKEEKTRIREHQERVAKKLRQGPWVHLPDRPVTSQRQFYSW</sequence>
<dbReference type="EMBL" id="CM002242">
    <property type="protein sequence ID" value="EAA30837.1"/>
    <property type="molecule type" value="Genomic_DNA"/>
</dbReference>
<dbReference type="RefSeq" id="XP_960073.1">
    <property type="nucleotide sequence ID" value="XM_954980.3"/>
</dbReference>
<dbReference type="PDB" id="6YWE">
    <property type="method" value="EM"/>
    <property type="resolution" value="2.99 A"/>
    <property type="chains" value="O=1-364"/>
</dbReference>
<dbReference type="PDB" id="6YWS">
    <property type="method" value="EM"/>
    <property type="resolution" value="2.74 A"/>
    <property type="chains" value="O=1-364"/>
</dbReference>
<dbReference type="PDB" id="6YWV">
    <property type="method" value="EM"/>
    <property type="resolution" value="3.03 A"/>
    <property type="chains" value="O=1-364"/>
</dbReference>
<dbReference type="PDB" id="6YWX">
    <property type="method" value="EM"/>
    <property type="resolution" value="3.10 A"/>
    <property type="chains" value="O=1-364"/>
</dbReference>
<dbReference type="PDB" id="6YWY">
    <property type="method" value="EM"/>
    <property type="resolution" value="3.05 A"/>
    <property type="chains" value="O=1-364"/>
</dbReference>
<dbReference type="PDBsum" id="6YWE"/>
<dbReference type="PDBsum" id="6YWS"/>
<dbReference type="PDBsum" id="6YWV"/>
<dbReference type="PDBsum" id="6YWX"/>
<dbReference type="PDBsum" id="6YWY"/>
<dbReference type="EMDB" id="EMD-10965"/>
<dbReference type="EMDB" id="EMD-10973"/>
<dbReference type="EMDB" id="EMD-10977"/>
<dbReference type="EMDB" id="EMD-10978"/>
<dbReference type="EMDB" id="EMD-10985"/>
<dbReference type="SMR" id="Q7S5N0"/>
<dbReference type="FunCoup" id="Q7S5N0">
    <property type="interactions" value="248"/>
</dbReference>
<dbReference type="STRING" id="367110.Q7S5N0"/>
<dbReference type="PaxDb" id="5141-EFNCRP00000005803"/>
<dbReference type="EnsemblFungi" id="EAA30837">
    <property type="protein sequence ID" value="EAA30837"/>
    <property type="gene ID" value="NCU05813"/>
</dbReference>
<dbReference type="GeneID" id="3876204"/>
<dbReference type="KEGG" id="ncr:NCU05813"/>
<dbReference type="VEuPathDB" id="FungiDB:NCU05813"/>
<dbReference type="HOGENOM" id="CLU_057182_0_0_1"/>
<dbReference type="InParanoid" id="Q7S5N0"/>
<dbReference type="OMA" id="QRQYYSW"/>
<dbReference type="OrthoDB" id="416470at2759"/>
<dbReference type="Proteomes" id="UP000001805">
    <property type="component" value="Chromosome 7, Linkage Group VII"/>
</dbReference>
<dbReference type="GO" id="GO:0015934">
    <property type="term" value="C:large ribosomal subunit"/>
    <property type="evidence" value="ECO:0000318"/>
    <property type="project" value="GO_Central"/>
</dbReference>
<dbReference type="GO" id="GO:0005739">
    <property type="term" value="C:mitochondrion"/>
    <property type="evidence" value="ECO:0007669"/>
    <property type="project" value="UniProtKB-SubCell"/>
</dbReference>
<dbReference type="GO" id="GO:0003735">
    <property type="term" value="F:structural constituent of ribosome"/>
    <property type="evidence" value="ECO:0000318"/>
    <property type="project" value="GO_Central"/>
</dbReference>
<dbReference type="GO" id="GO:0006412">
    <property type="term" value="P:translation"/>
    <property type="evidence" value="ECO:0000318"/>
    <property type="project" value="GO_Central"/>
</dbReference>
<dbReference type="CDD" id="cd00336">
    <property type="entry name" value="Ribosomal_L22"/>
    <property type="match status" value="1"/>
</dbReference>
<dbReference type="FunFam" id="3.90.470.10:FF:000017">
    <property type="entry name" value="54S ribosomal protein L22, mitochondrial"/>
    <property type="match status" value="1"/>
</dbReference>
<dbReference type="Gene3D" id="3.90.470.10">
    <property type="entry name" value="Ribosomal protein L22/L17"/>
    <property type="match status" value="1"/>
</dbReference>
<dbReference type="InterPro" id="IPR001063">
    <property type="entry name" value="Ribosomal_uL22"/>
</dbReference>
<dbReference type="InterPro" id="IPR047867">
    <property type="entry name" value="Ribosomal_uL22_bac/org-type"/>
</dbReference>
<dbReference type="InterPro" id="IPR036394">
    <property type="entry name" value="Ribosomal_uL22_sf"/>
</dbReference>
<dbReference type="PANTHER" id="PTHR13501">
    <property type="entry name" value="CHLOROPLAST 50S RIBOSOMAL PROTEIN L22-RELATED"/>
    <property type="match status" value="1"/>
</dbReference>
<dbReference type="PANTHER" id="PTHR13501:SF10">
    <property type="entry name" value="LARGE RIBOSOMAL SUBUNIT PROTEIN UL22M"/>
    <property type="match status" value="1"/>
</dbReference>
<dbReference type="Pfam" id="PF00237">
    <property type="entry name" value="Ribosomal_L22"/>
    <property type="match status" value="1"/>
</dbReference>
<dbReference type="SUPFAM" id="SSF54843">
    <property type="entry name" value="Ribosomal protein L22"/>
    <property type="match status" value="1"/>
</dbReference>
<reference key="1">
    <citation type="journal article" date="2003" name="Nature">
        <title>The genome sequence of the filamentous fungus Neurospora crassa.</title>
        <authorList>
            <person name="Galagan J.E."/>
            <person name="Calvo S.E."/>
            <person name="Borkovich K.A."/>
            <person name="Selker E.U."/>
            <person name="Read N.D."/>
            <person name="Jaffe D.B."/>
            <person name="FitzHugh W."/>
            <person name="Ma L.-J."/>
            <person name="Smirnov S."/>
            <person name="Purcell S."/>
            <person name="Rehman B."/>
            <person name="Elkins T."/>
            <person name="Engels R."/>
            <person name="Wang S."/>
            <person name="Nielsen C.B."/>
            <person name="Butler J."/>
            <person name="Endrizzi M."/>
            <person name="Qui D."/>
            <person name="Ianakiev P."/>
            <person name="Bell-Pedersen D."/>
            <person name="Nelson M.A."/>
            <person name="Werner-Washburne M."/>
            <person name="Selitrennikoff C.P."/>
            <person name="Kinsey J.A."/>
            <person name="Braun E.L."/>
            <person name="Zelter A."/>
            <person name="Schulte U."/>
            <person name="Kothe G.O."/>
            <person name="Jedd G."/>
            <person name="Mewes H.-W."/>
            <person name="Staben C."/>
            <person name="Marcotte E."/>
            <person name="Greenberg D."/>
            <person name="Roy A."/>
            <person name="Foley K."/>
            <person name="Naylor J."/>
            <person name="Stange-Thomann N."/>
            <person name="Barrett R."/>
            <person name="Gnerre S."/>
            <person name="Kamal M."/>
            <person name="Kamvysselis M."/>
            <person name="Mauceli E.W."/>
            <person name="Bielke C."/>
            <person name="Rudd S."/>
            <person name="Frishman D."/>
            <person name="Krystofova S."/>
            <person name="Rasmussen C."/>
            <person name="Metzenberg R.L."/>
            <person name="Perkins D.D."/>
            <person name="Kroken S."/>
            <person name="Cogoni C."/>
            <person name="Macino G."/>
            <person name="Catcheside D.E.A."/>
            <person name="Li W."/>
            <person name="Pratt R.J."/>
            <person name="Osmani S.A."/>
            <person name="DeSouza C.P.C."/>
            <person name="Glass N.L."/>
            <person name="Orbach M.J."/>
            <person name="Berglund J.A."/>
            <person name="Voelker R."/>
            <person name="Yarden O."/>
            <person name="Plamann M."/>
            <person name="Seiler S."/>
            <person name="Dunlap J.C."/>
            <person name="Radford A."/>
            <person name="Aramayo R."/>
            <person name="Natvig D.O."/>
            <person name="Alex L.A."/>
            <person name="Mannhaupt G."/>
            <person name="Ebbole D.J."/>
            <person name="Freitag M."/>
            <person name="Paulsen I."/>
            <person name="Sachs M.S."/>
            <person name="Lander E.S."/>
            <person name="Nusbaum C."/>
            <person name="Birren B.W."/>
        </authorList>
    </citation>
    <scope>NUCLEOTIDE SEQUENCE [LARGE SCALE GENOMIC DNA]</scope>
    <source>
        <strain>ATCC 24698 / 74-OR23-1A / CBS 708.71 / DSM 1257 / FGSC 987</strain>
    </source>
</reference>
<reference key="2">
    <citation type="journal article" date="2006" name="FEMS Microbiol. Lett.">
        <title>Identification and comparative analysis of the large subunit mitochondrial ribosomal proteins of Neurospora crassa.</title>
        <authorList>
            <person name="Gan X."/>
            <person name="Arita K."/>
            <person name="Isono S."/>
            <person name="Kitakawa M."/>
            <person name="Yoshino K."/>
            <person name="Yonezawa K."/>
            <person name="Kato A."/>
            <person name="Inoue H."/>
            <person name="Isono K."/>
        </authorList>
    </citation>
    <scope>IDENTIFICATION IN THE MITOCHONDRIAL RIBOSOMAL LARGE COMPLEX</scope>
    <scope>IDENTIFICATION BY MASS SPECTROMETRY</scope>
</reference>
<reference evidence="6 7" key="3">
    <citation type="journal article" date="2020" name="Nat. Commun.">
        <title>Analysis of translating mitoribosome reveals functional characteristics of translation in mitochondria of fungi.</title>
        <authorList>
            <person name="Itoh Y."/>
            <person name="Naschberger A."/>
            <person name="Mortezaei N."/>
            <person name="Herrmann J.M."/>
            <person name="Amunts A."/>
        </authorList>
    </citation>
    <scope>STRUCTURE BY ELECTRON MICROSCOPY (2.74 ANGSTROMS)</scope>
</reference>
<accession>Q7S5N0</accession>
<keyword id="KW-0002">3D-structure</keyword>
<keyword id="KW-0496">Mitochondrion</keyword>
<keyword id="KW-1185">Reference proteome</keyword>
<keyword id="KW-0687">Ribonucleoprotein</keyword>
<keyword id="KW-0689">Ribosomal protein</keyword>
<protein>
    <recommendedName>
        <fullName evidence="3">Large ribosomal subunit protein uL22m</fullName>
    </recommendedName>
</protein>
<proteinExistence type="evidence at protein level"/>
<organism>
    <name type="scientific">Neurospora crassa (strain ATCC 24698 / 74-OR23-1A / CBS 708.71 / DSM 1257 / FGSC 987)</name>
    <dbReference type="NCBI Taxonomy" id="367110"/>
    <lineage>
        <taxon>Eukaryota</taxon>
        <taxon>Fungi</taxon>
        <taxon>Dikarya</taxon>
        <taxon>Ascomycota</taxon>
        <taxon>Pezizomycotina</taxon>
        <taxon>Sordariomycetes</taxon>
        <taxon>Sordariomycetidae</taxon>
        <taxon>Sordariales</taxon>
        <taxon>Sordariaceae</taxon>
        <taxon>Neurospora</taxon>
    </lineage>
</organism>
<name>RM22_NEUCR</name>